<organism>
    <name type="scientific">Caenorhabditis elegans</name>
    <dbReference type="NCBI Taxonomy" id="6239"/>
    <lineage>
        <taxon>Eukaryota</taxon>
        <taxon>Metazoa</taxon>
        <taxon>Ecdysozoa</taxon>
        <taxon>Nematoda</taxon>
        <taxon>Chromadorea</taxon>
        <taxon>Rhabditida</taxon>
        <taxon>Rhabditina</taxon>
        <taxon>Rhabditomorpha</taxon>
        <taxon>Rhabditoidea</taxon>
        <taxon>Rhabditidae</taxon>
        <taxon>Peloderinae</taxon>
        <taxon>Caenorhabditis</taxon>
    </lineage>
</organism>
<comment type="function">
    <text evidence="1">Associates with the EF-Tu.GDP complex and induces the exchange of GDP to GTP. It remains bound to the aminoacyl-tRNA.EF-Tu.GTP complex up to the GTP hydrolysis stage on the ribosome.</text>
</comment>
<comment type="subcellular location">
    <subcellularLocation>
        <location evidence="1">Mitochondrion</location>
    </subcellularLocation>
</comment>
<comment type="similarity">
    <text evidence="1">Belongs to the EF-Ts family.</text>
</comment>
<protein>
    <recommendedName>
        <fullName evidence="1">Elongation factor Ts, mitochondrial</fullName>
        <shortName evidence="1">EF-Ts</shortName>
        <shortName evidence="1">EF-TsMt</shortName>
    </recommendedName>
</protein>
<reference key="1">
    <citation type="journal article" date="1997" name="Biochim. Biophys. Acta">
        <title>cDNA sequence of a translational elongation factor Ts homologue from Caenorhabditis elegans: mitochondrial factor-specific features found in the nematode homologue peptide.</title>
        <authorList>
            <person name="Watanabe Y."/>
            <person name="Kita K."/>
            <person name="Ueda T."/>
            <person name="Watanabe K."/>
        </authorList>
    </citation>
    <scope>NUCLEOTIDE SEQUENCE [MRNA]</scope>
    <source>
        <strain>Bristol N2</strain>
    </source>
</reference>
<reference key="2">
    <citation type="journal article" date="1998" name="Science">
        <title>Genome sequence of the nematode C. elegans: a platform for investigating biology.</title>
        <authorList>
            <consortium name="The C. elegans sequencing consortium"/>
        </authorList>
    </citation>
    <scope>NUCLEOTIDE SEQUENCE [LARGE SCALE GENOMIC DNA]</scope>
    <source>
        <strain>Bristol N2</strain>
    </source>
</reference>
<proteinExistence type="evidence at transcript level"/>
<evidence type="ECO:0000255" key="1">
    <source>
        <dbReference type="HAMAP-Rule" id="MF_03135"/>
    </source>
</evidence>
<evidence type="ECO:0000256" key="2">
    <source>
        <dbReference type="SAM" id="MobiDB-lite"/>
    </source>
</evidence>
<name>EFTS_CAEEL</name>
<dbReference type="EMBL" id="D87850">
    <property type="protein sequence ID" value="BAA13470.1"/>
    <property type="molecule type" value="mRNA"/>
</dbReference>
<dbReference type="EMBL" id="Z78198">
    <property type="protein sequence ID" value="CAB01570.1"/>
    <property type="molecule type" value="Genomic_DNA"/>
</dbReference>
<dbReference type="PIR" id="T22713">
    <property type="entry name" value="T22713"/>
</dbReference>
<dbReference type="RefSeq" id="NP_506079.1">
    <property type="nucleotide sequence ID" value="NM_073678.6"/>
</dbReference>
<dbReference type="SMR" id="Q20819"/>
<dbReference type="BioGRID" id="44706">
    <property type="interactions" value="7"/>
</dbReference>
<dbReference type="DIP" id="DIP-25617N"/>
<dbReference type="FunCoup" id="Q20819">
    <property type="interactions" value="3146"/>
</dbReference>
<dbReference type="STRING" id="6239.F55C5.5.1"/>
<dbReference type="PaxDb" id="6239-F55C5.5"/>
<dbReference type="PeptideAtlas" id="Q20819"/>
<dbReference type="EnsemblMetazoa" id="F55C5.5.1">
    <property type="protein sequence ID" value="F55C5.5.1"/>
    <property type="gene ID" value="WBGene00010094"/>
</dbReference>
<dbReference type="GeneID" id="179683"/>
<dbReference type="KEGG" id="cel:CELE_F55C5.5"/>
<dbReference type="UCSC" id="F55C5.5">
    <property type="organism name" value="c. elegans"/>
</dbReference>
<dbReference type="AGR" id="WB:WBGene00010094"/>
<dbReference type="CTD" id="179683"/>
<dbReference type="WormBase" id="F55C5.5">
    <property type="protein sequence ID" value="CE11158"/>
    <property type="gene ID" value="WBGene00010094"/>
    <property type="gene designation" value="tsfm-1"/>
</dbReference>
<dbReference type="eggNOG" id="KOG1071">
    <property type="taxonomic scope" value="Eukaryota"/>
</dbReference>
<dbReference type="GeneTree" id="ENSGT00390000016293"/>
<dbReference type="HOGENOM" id="CLU_047155_4_0_1"/>
<dbReference type="InParanoid" id="Q20819"/>
<dbReference type="OMA" id="QEYMLDD"/>
<dbReference type="OrthoDB" id="277235at2759"/>
<dbReference type="PhylomeDB" id="Q20819"/>
<dbReference type="PRO" id="PR:Q20819"/>
<dbReference type="Proteomes" id="UP000001940">
    <property type="component" value="Chromosome V"/>
</dbReference>
<dbReference type="Bgee" id="WBGene00010094">
    <property type="expression patterns" value="Expressed in germ line (C elegans) and 4 other cell types or tissues"/>
</dbReference>
<dbReference type="GO" id="GO:0005739">
    <property type="term" value="C:mitochondrion"/>
    <property type="evidence" value="ECO:0007669"/>
    <property type="project" value="UniProtKB-SubCell"/>
</dbReference>
<dbReference type="GO" id="GO:0003746">
    <property type="term" value="F:translation elongation factor activity"/>
    <property type="evidence" value="ECO:0000318"/>
    <property type="project" value="GO_Central"/>
</dbReference>
<dbReference type="GO" id="GO:0070125">
    <property type="term" value="P:mitochondrial translational elongation"/>
    <property type="evidence" value="ECO:0000318"/>
    <property type="project" value="GO_Central"/>
</dbReference>
<dbReference type="CDD" id="cd14275">
    <property type="entry name" value="UBA_EF-Ts"/>
    <property type="match status" value="1"/>
</dbReference>
<dbReference type="FunFam" id="1.10.8.10:FF:000031">
    <property type="entry name" value="Elongation factor Ts, mitochondrial"/>
    <property type="match status" value="1"/>
</dbReference>
<dbReference type="FunFam" id="3.30.479.20:FF:000034">
    <property type="entry name" value="Elongation factor Ts, mitochondrial"/>
    <property type="match status" value="1"/>
</dbReference>
<dbReference type="Gene3D" id="1.10.8.10">
    <property type="entry name" value="DNA helicase RuvA subunit, C-terminal domain"/>
    <property type="match status" value="1"/>
</dbReference>
<dbReference type="Gene3D" id="3.30.479.20">
    <property type="entry name" value="Elongation factor Ts, dimerisation domain"/>
    <property type="match status" value="2"/>
</dbReference>
<dbReference type="HAMAP" id="MF_00050">
    <property type="entry name" value="EF_Ts"/>
    <property type="match status" value="1"/>
</dbReference>
<dbReference type="InterPro" id="IPR036402">
    <property type="entry name" value="EF-Ts_dimer_sf"/>
</dbReference>
<dbReference type="InterPro" id="IPR001816">
    <property type="entry name" value="Transl_elong_EFTs/EF1B"/>
</dbReference>
<dbReference type="InterPro" id="IPR014039">
    <property type="entry name" value="Transl_elong_EFTs/EF1B_dimer"/>
</dbReference>
<dbReference type="InterPro" id="IPR018101">
    <property type="entry name" value="Transl_elong_Ts_CS"/>
</dbReference>
<dbReference type="InterPro" id="IPR009060">
    <property type="entry name" value="UBA-like_sf"/>
</dbReference>
<dbReference type="NCBIfam" id="TIGR00116">
    <property type="entry name" value="tsf"/>
    <property type="match status" value="1"/>
</dbReference>
<dbReference type="PANTHER" id="PTHR11741">
    <property type="entry name" value="ELONGATION FACTOR TS"/>
    <property type="match status" value="1"/>
</dbReference>
<dbReference type="PANTHER" id="PTHR11741:SF0">
    <property type="entry name" value="ELONGATION FACTOR TS, MITOCHONDRIAL"/>
    <property type="match status" value="1"/>
</dbReference>
<dbReference type="Pfam" id="PF25025">
    <property type="entry name" value="EF-Ts_N"/>
    <property type="match status" value="1"/>
</dbReference>
<dbReference type="Pfam" id="PF00889">
    <property type="entry name" value="EF_TS"/>
    <property type="match status" value="1"/>
</dbReference>
<dbReference type="SUPFAM" id="SSF54713">
    <property type="entry name" value="Elongation factor Ts (EF-Ts), dimerisation domain"/>
    <property type="match status" value="2"/>
</dbReference>
<dbReference type="SUPFAM" id="SSF46934">
    <property type="entry name" value="UBA-like"/>
    <property type="match status" value="1"/>
</dbReference>
<dbReference type="PROSITE" id="PS01127">
    <property type="entry name" value="EF_TS_2"/>
    <property type="match status" value="1"/>
</dbReference>
<accession>Q20819</accession>
<keyword id="KW-0251">Elongation factor</keyword>
<keyword id="KW-0496">Mitochondrion</keyword>
<keyword id="KW-0648">Protein biosynthesis</keyword>
<keyword id="KW-1185">Reference proteome</keyword>
<keyword id="KW-0809">Transit peptide</keyword>
<sequence length="316" mass="34088">MFARAPFVRLLSTTSRNLAEAEKKVSKEALMALRKKTGYSYVNCRKALIQFGENDMDSAVKWLKEAAAKEGWAKAAKLGTRVTSNGLVSVVTDNSTAAVVELSCETDFVARSGAFKDLLSNISNSVLAKAKPQSISSGSKLQEFTYDLGDLTDSDGKNMREVLSLSIGKLGENMTVRRVKAFKAPEGTTLFGASHPKDGTDDIPMGRFISLIALNQSSPGSISSQQLAGQICQHIIGMSPESLGEAAESVKTQEGLRSQEGHDPNADPVVVTNIDESETALLRQAFMLNPSQSVHEYLKSHNANILDFVRVELGSE</sequence>
<gene>
    <name evidence="1" type="primary">tsfm-1</name>
    <name type="ORF">F55C5.5</name>
</gene>
<feature type="transit peptide" description="Mitochondrion" evidence="1">
    <location>
        <begin position="1"/>
        <end position="18"/>
    </location>
</feature>
<feature type="chain" id="PRO_0000402322" description="Elongation factor Ts, mitochondrial">
    <location>
        <begin position="19"/>
        <end position="316"/>
    </location>
</feature>
<feature type="region of interest" description="Disordered" evidence="2">
    <location>
        <begin position="245"/>
        <end position="269"/>
    </location>
</feature>